<feature type="chain" id="PRO_1000123400" description="Pantothenate synthetase">
    <location>
        <begin position="1"/>
        <end position="282"/>
    </location>
</feature>
<feature type="active site" description="Proton donor" evidence="1">
    <location>
        <position position="37"/>
    </location>
</feature>
<feature type="binding site" evidence="1">
    <location>
        <begin position="30"/>
        <end position="37"/>
    </location>
    <ligand>
        <name>ATP</name>
        <dbReference type="ChEBI" id="CHEBI:30616"/>
    </ligand>
</feature>
<feature type="binding site" evidence="1">
    <location>
        <position position="61"/>
    </location>
    <ligand>
        <name>(R)-pantoate</name>
        <dbReference type="ChEBI" id="CHEBI:15980"/>
    </ligand>
</feature>
<feature type="binding site" evidence="1">
    <location>
        <position position="61"/>
    </location>
    <ligand>
        <name>beta-alanine</name>
        <dbReference type="ChEBI" id="CHEBI:57966"/>
    </ligand>
</feature>
<feature type="binding site" evidence="1">
    <location>
        <begin position="147"/>
        <end position="150"/>
    </location>
    <ligand>
        <name>ATP</name>
        <dbReference type="ChEBI" id="CHEBI:30616"/>
    </ligand>
</feature>
<feature type="binding site" evidence="1">
    <location>
        <position position="153"/>
    </location>
    <ligand>
        <name>(R)-pantoate</name>
        <dbReference type="ChEBI" id="CHEBI:15980"/>
    </ligand>
</feature>
<feature type="binding site" evidence="1">
    <location>
        <position position="176"/>
    </location>
    <ligand>
        <name>ATP</name>
        <dbReference type="ChEBI" id="CHEBI:30616"/>
    </ligand>
</feature>
<feature type="binding site" evidence="1">
    <location>
        <begin position="184"/>
        <end position="187"/>
    </location>
    <ligand>
        <name>ATP</name>
        <dbReference type="ChEBI" id="CHEBI:30616"/>
    </ligand>
</feature>
<protein>
    <recommendedName>
        <fullName evidence="1">Pantothenate synthetase</fullName>
        <shortName evidence="1">PS</shortName>
        <ecNumber evidence="1">6.3.2.1</ecNumber>
    </recommendedName>
    <alternativeName>
        <fullName evidence="1">Pantoate--beta-alanine ligase</fullName>
    </alternativeName>
    <alternativeName>
        <fullName evidence="1">Pantoate-activating enzyme</fullName>
    </alternativeName>
</protein>
<proteinExistence type="inferred from homology"/>
<dbReference type="EC" id="6.3.2.1" evidence="1"/>
<dbReference type="EMBL" id="CP001407">
    <property type="protein sequence ID" value="ACO29850.1"/>
    <property type="molecule type" value="Genomic_DNA"/>
</dbReference>
<dbReference type="RefSeq" id="WP_000707001.1">
    <property type="nucleotide sequence ID" value="NZ_CP009318.1"/>
</dbReference>
<dbReference type="SMR" id="C1EN37"/>
<dbReference type="KEGG" id="bcx:BCA_1599"/>
<dbReference type="PATRIC" id="fig|572264.18.peg.1547"/>
<dbReference type="UniPathway" id="UPA00028">
    <property type="reaction ID" value="UER00005"/>
</dbReference>
<dbReference type="Proteomes" id="UP000002210">
    <property type="component" value="Chromosome"/>
</dbReference>
<dbReference type="GO" id="GO:0005829">
    <property type="term" value="C:cytosol"/>
    <property type="evidence" value="ECO:0007669"/>
    <property type="project" value="TreeGrafter"/>
</dbReference>
<dbReference type="GO" id="GO:0005524">
    <property type="term" value="F:ATP binding"/>
    <property type="evidence" value="ECO:0007669"/>
    <property type="project" value="UniProtKB-KW"/>
</dbReference>
<dbReference type="GO" id="GO:0004592">
    <property type="term" value="F:pantoate-beta-alanine ligase activity"/>
    <property type="evidence" value="ECO:0007669"/>
    <property type="project" value="UniProtKB-UniRule"/>
</dbReference>
<dbReference type="GO" id="GO:0015940">
    <property type="term" value="P:pantothenate biosynthetic process"/>
    <property type="evidence" value="ECO:0007669"/>
    <property type="project" value="UniProtKB-UniRule"/>
</dbReference>
<dbReference type="CDD" id="cd00560">
    <property type="entry name" value="PanC"/>
    <property type="match status" value="1"/>
</dbReference>
<dbReference type="FunFam" id="3.30.1300.10:FF:000001">
    <property type="entry name" value="Pantothenate synthetase"/>
    <property type="match status" value="1"/>
</dbReference>
<dbReference type="FunFam" id="3.40.50.620:FF:000013">
    <property type="entry name" value="Pantothenate synthetase"/>
    <property type="match status" value="1"/>
</dbReference>
<dbReference type="Gene3D" id="3.40.50.620">
    <property type="entry name" value="HUPs"/>
    <property type="match status" value="1"/>
</dbReference>
<dbReference type="Gene3D" id="3.30.1300.10">
    <property type="entry name" value="Pantoate-beta-alanine ligase, C-terminal domain"/>
    <property type="match status" value="1"/>
</dbReference>
<dbReference type="HAMAP" id="MF_00158">
    <property type="entry name" value="PanC"/>
    <property type="match status" value="1"/>
</dbReference>
<dbReference type="InterPro" id="IPR004821">
    <property type="entry name" value="Cyt_trans-like"/>
</dbReference>
<dbReference type="InterPro" id="IPR003721">
    <property type="entry name" value="Pantoate_ligase"/>
</dbReference>
<dbReference type="InterPro" id="IPR042176">
    <property type="entry name" value="Pantoate_ligase_C"/>
</dbReference>
<dbReference type="InterPro" id="IPR014729">
    <property type="entry name" value="Rossmann-like_a/b/a_fold"/>
</dbReference>
<dbReference type="NCBIfam" id="TIGR00125">
    <property type="entry name" value="cyt_tran_rel"/>
    <property type="match status" value="1"/>
</dbReference>
<dbReference type="NCBIfam" id="TIGR00018">
    <property type="entry name" value="panC"/>
    <property type="match status" value="1"/>
</dbReference>
<dbReference type="PANTHER" id="PTHR21299">
    <property type="entry name" value="CYTIDYLATE KINASE/PANTOATE-BETA-ALANINE LIGASE"/>
    <property type="match status" value="1"/>
</dbReference>
<dbReference type="PANTHER" id="PTHR21299:SF1">
    <property type="entry name" value="PANTOATE--BETA-ALANINE LIGASE"/>
    <property type="match status" value="1"/>
</dbReference>
<dbReference type="Pfam" id="PF02569">
    <property type="entry name" value="Pantoate_ligase"/>
    <property type="match status" value="1"/>
</dbReference>
<dbReference type="SUPFAM" id="SSF52374">
    <property type="entry name" value="Nucleotidylyl transferase"/>
    <property type="match status" value="1"/>
</dbReference>
<accession>C1EN37</accession>
<name>PANC_BACC3</name>
<gene>
    <name evidence="1" type="primary">panC</name>
    <name type="ordered locus">BCA_1599</name>
</gene>
<organism>
    <name type="scientific">Bacillus cereus (strain 03BB102)</name>
    <dbReference type="NCBI Taxonomy" id="572264"/>
    <lineage>
        <taxon>Bacteria</taxon>
        <taxon>Bacillati</taxon>
        <taxon>Bacillota</taxon>
        <taxon>Bacilli</taxon>
        <taxon>Bacillales</taxon>
        <taxon>Bacillaceae</taxon>
        <taxon>Bacillus</taxon>
        <taxon>Bacillus cereus group</taxon>
    </lineage>
</organism>
<comment type="function">
    <text evidence="1">Catalyzes the condensation of pantoate with beta-alanine in an ATP-dependent reaction via a pantoyl-adenylate intermediate.</text>
</comment>
<comment type="catalytic activity">
    <reaction evidence="1">
        <text>(R)-pantoate + beta-alanine + ATP = (R)-pantothenate + AMP + diphosphate + H(+)</text>
        <dbReference type="Rhea" id="RHEA:10912"/>
        <dbReference type="ChEBI" id="CHEBI:15378"/>
        <dbReference type="ChEBI" id="CHEBI:15980"/>
        <dbReference type="ChEBI" id="CHEBI:29032"/>
        <dbReference type="ChEBI" id="CHEBI:30616"/>
        <dbReference type="ChEBI" id="CHEBI:33019"/>
        <dbReference type="ChEBI" id="CHEBI:57966"/>
        <dbReference type="ChEBI" id="CHEBI:456215"/>
        <dbReference type="EC" id="6.3.2.1"/>
    </reaction>
</comment>
<comment type="pathway">
    <text evidence="1">Cofactor biosynthesis; (R)-pantothenate biosynthesis; (R)-pantothenate from (R)-pantoate and beta-alanine: step 1/1.</text>
</comment>
<comment type="subunit">
    <text evidence="1">Homodimer.</text>
</comment>
<comment type="subcellular location">
    <subcellularLocation>
        <location evidence="1">Cytoplasm</location>
    </subcellularLocation>
</comment>
<comment type="miscellaneous">
    <text evidence="1">The reaction proceeds by a bi uni uni bi ping pong mechanism.</text>
</comment>
<comment type="similarity">
    <text evidence="1">Belongs to the pantothenate synthetase family.</text>
</comment>
<evidence type="ECO:0000255" key="1">
    <source>
        <dbReference type="HAMAP-Rule" id="MF_00158"/>
    </source>
</evidence>
<reference key="1">
    <citation type="submission" date="2009-02" db="EMBL/GenBank/DDBJ databases">
        <title>Genome sequence of Bacillus cereus 03BB102.</title>
        <authorList>
            <person name="Dodson R.J."/>
            <person name="Jackson P."/>
            <person name="Munk A.C."/>
            <person name="Brettin T."/>
            <person name="Bruce D."/>
            <person name="Detter C."/>
            <person name="Tapia R."/>
            <person name="Han C."/>
            <person name="Sutton G."/>
            <person name="Sims D."/>
        </authorList>
    </citation>
    <scope>NUCLEOTIDE SEQUENCE [LARGE SCALE GENOMIC DNA]</scope>
    <source>
        <strain>03BB102</strain>
    </source>
</reference>
<keyword id="KW-0067">ATP-binding</keyword>
<keyword id="KW-0963">Cytoplasm</keyword>
<keyword id="KW-0436">Ligase</keyword>
<keyword id="KW-0547">Nucleotide-binding</keyword>
<keyword id="KW-0566">Pantothenate biosynthesis</keyword>
<sequence length="282" mass="31960">MKIVTTVQEMQHITKELRASGKSIGFVPTMGYLHEGHATLLRKAREENEIVVLSVFVNPLQFGPNEDLDRYPRDIDRDENVAKENGVDYLFYPSVEEMYPVEQTTTVEVVKRTDVLCGKQRPGHFAGVATVLMKLFNITLPTHAYFGMKDAQQVAVIEGFVADFNIPVTIVPVDIVREEDGLAKSSRNVYLSQEERKEAPHLYRSLCMAKERIEAGERNAEIITTLVKEYIETYTKGTVDYADLYAYPSLQVVDQIEGRIILAIAVKFENVRLIDNITLTVK</sequence>